<sequence>MRIERVDDTTVKLFITYSDIEARGFSREDLWTNRKRGEEFFWSMMDEINEEEDFVVEGPLWIQVHAFEKGVEVTISKSKNEDMMNMSDDDATDQFDEQVQELLAQTLEGEDQLEELFEQRTKEKEAQGSKRQKSSARKNTRTIIVKFNDLEDVINYAYHSNPITTEFEDLLYMVDGTYYYAVYFDSHVDQEVINDSYSQLLEFAYPTDRTEVYLNDYAKIIMSHNVTAQVRRYFPETTE</sequence>
<accession>Q2FI79</accession>
<name>MECA_STAA3</name>
<dbReference type="EMBL" id="CP000255">
    <property type="protein sequence ID" value="ABD21664.1"/>
    <property type="molecule type" value="Genomic_DNA"/>
</dbReference>
<dbReference type="RefSeq" id="WP_001217730.1">
    <property type="nucleotide sequence ID" value="NZ_CP027476.1"/>
</dbReference>
<dbReference type="SMR" id="Q2FI79"/>
<dbReference type="KEGG" id="saa:SAUSA300_0899"/>
<dbReference type="HOGENOM" id="CLU_071496_2_1_9"/>
<dbReference type="OMA" id="EFFYTVM"/>
<dbReference type="PHI-base" id="PHI:7352"/>
<dbReference type="Proteomes" id="UP000001939">
    <property type="component" value="Chromosome"/>
</dbReference>
<dbReference type="GO" id="GO:0030674">
    <property type="term" value="F:protein-macromolecule adaptor activity"/>
    <property type="evidence" value="ECO:0007669"/>
    <property type="project" value="UniProtKB-UniRule"/>
</dbReference>
<dbReference type="Gene3D" id="3.30.70.1950">
    <property type="match status" value="1"/>
</dbReference>
<dbReference type="HAMAP" id="MF_01124">
    <property type="entry name" value="MecA"/>
    <property type="match status" value="1"/>
</dbReference>
<dbReference type="InterPro" id="IPR038471">
    <property type="entry name" value="MecA_C_sf"/>
</dbReference>
<dbReference type="InterPro" id="IPR008681">
    <property type="entry name" value="Neg-reg_MecA"/>
</dbReference>
<dbReference type="NCBIfam" id="NF002642">
    <property type="entry name" value="PRK02315.1-3"/>
    <property type="match status" value="1"/>
</dbReference>
<dbReference type="NCBIfam" id="NF002644">
    <property type="entry name" value="PRK02315.1-5"/>
    <property type="match status" value="1"/>
</dbReference>
<dbReference type="PANTHER" id="PTHR39161">
    <property type="entry name" value="ADAPTER PROTEIN MECA"/>
    <property type="match status" value="1"/>
</dbReference>
<dbReference type="PANTHER" id="PTHR39161:SF1">
    <property type="entry name" value="ADAPTER PROTEIN MECA 1"/>
    <property type="match status" value="1"/>
</dbReference>
<dbReference type="Pfam" id="PF05389">
    <property type="entry name" value="MecA"/>
    <property type="match status" value="1"/>
</dbReference>
<dbReference type="PIRSF" id="PIRSF029008">
    <property type="entry name" value="MecA"/>
    <property type="match status" value="1"/>
</dbReference>
<proteinExistence type="inferred from homology"/>
<evidence type="ECO:0000255" key="1">
    <source>
        <dbReference type="HAMAP-Rule" id="MF_01124"/>
    </source>
</evidence>
<evidence type="ECO:0000256" key="2">
    <source>
        <dbReference type="SAM" id="MobiDB-lite"/>
    </source>
</evidence>
<protein>
    <recommendedName>
        <fullName evidence="1">Adapter protein MecA</fullName>
    </recommendedName>
</protein>
<gene>
    <name evidence="1" type="primary">mecA</name>
    <name type="ordered locus">SAUSA300_0899</name>
</gene>
<organism>
    <name type="scientific">Staphylococcus aureus (strain USA300)</name>
    <dbReference type="NCBI Taxonomy" id="367830"/>
    <lineage>
        <taxon>Bacteria</taxon>
        <taxon>Bacillati</taxon>
        <taxon>Bacillota</taxon>
        <taxon>Bacilli</taxon>
        <taxon>Bacillales</taxon>
        <taxon>Staphylococcaceae</taxon>
        <taxon>Staphylococcus</taxon>
    </lineage>
</organism>
<comment type="function">
    <text evidence="1">Enables the recognition and targeting of unfolded and aggregated proteins to the ClpC protease or to other proteins involved in proteolysis.</text>
</comment>
<comment type="subunit">
    <text evidence="1">Homodimer.</text>
</comment>
<comment type="domain">
    <text>The N-terminal domain probably binds unfolded/aggregated proteins; the C-terminal domain interacts with ClpC.</text>
</comment>
<comment type="similarity">
    <text evidence="1">Belongs to the MecA family.</text>
</comment>
<reference key="1">
    <citation type="journal article" date="2006" name="Lancet">
        <title>Complete genome sequence of USA300, an epidemic clone of community-acquired meticillin-resistant Staphylococcus aureus.</title>
        <authorList>
            <person name="Diep B.A."/>
            <person name="Gill S.R."/>
            <person name="Chang R.F."/>
            <person name="Phan T.H."/>
            <person name="Chen J.H."/>
            <person name="Davidson M.G."/>
            <person name="Lin F."/>
            <person name="Lin J."/>
            <person name="Carleton H.A."/>
            <person name="Mongodin E.F."/>
            <person name="Sensabaugh G.F."/>
            <person name="Perdreau-Remington F."/>
        </authorList>
    </citation>
    <scope>NUCLEOTIDE SEQUENCE [LARGE SCALE GENOMIC DNA]</scope>
    <source>
        <strain>USA300</strain>
    </source>
</reference>
<feature type="chain" id="PRO_1000065346" description="Adapter protein MecA">
    <location>
        <begin position="1"/>
        <end position="239"/>
    </location>
</feature>
<feature type="region of interest" description="Disordered" evidence="2">
    <location>
        <begin position="118"/>
        <end position="137"/>
    </location>
</feature>
<feature type="compositionally biased region" description="Basic and acidic residues" evidence="2">
    <location>
        <begin position="118"/>
        <end position="128"/>
    </location>
</feature>